<gene>
    <name evidence="1" type="primary">ogt</name>
    <name type="ordered locus">Rv1316c</name>
    <name type="ORF">MTCY130.01c</name>
</gene>
<accession>P9WJW5</accession>
<accession>L0T9A0</accession>
<accession>P0A696</accession>
<accession>Q10627</accession>
<comment type="function">
    <text evidence="1">Involved in the cellular defense against the biological effects of O6-methylguanine (O6-MeG) and O4-methylthymine (O4-MeT) in DNA. Repairs the methylated nucleobase in DNA by stoichiometrically transferring the methyl group to a cysteine residue in the enzyme. This is a suicide reaction: the enzyme is irreversibly inactivated.</text>
</comment>
<comment type="catalytic activity">
    <reaction evidence="1">
        <text>a 6-O-methyl-2'-deoxyguanosine in DNA + L-cysteinyl-[protein] = S-methyl-L-cysteinyl-[protein] + a 2'-deoxyguanosine in DNA</text>
        <dbReference type="Rhea" id="RHEA:24000"/>
        <dbReference type="Rhea" id="RHEA-COMP:10131"/>
        <dbReference type="Rhea" id="RHEA-COMP:10132"/>
        <dbReference type="Rhea" id="RHEA-COMP:11367"/>
        <dbReference type="Rhea" id="RHEA-COMP:11368"/>
        <dbReference type="ChEBI" id="CHEBI:29950"/>
        <dbReference type="ChEBI" id="CHEBI:82612"/>
        <dbReference type="ChEBI" id="CHEBI:85445"/>
        <dbReference type="ChEBI" id="CHEBI:85448"/>
        <dbReference type="EC" id="2.1.1.63"/>
    </reaction>
</comment>
<comment type="catalytic activity">
    <reaction evidence="1">
        <text>a 4-O-methyl-thymidine in DNA + L-cysteinyl-[protein] = a thymidine in DNA + S-methyl-L-cysteinyl-[protein]</text>
        <dbReference type="Rhea" id="RHEA:53428"/>
        <dbReference type="Rhea" id="RHEA-COMP:10131"/>
        <dbReference type="Rhea" id="RHEA-COMP:10132"/>
        <dbReference type="Rhea" id="RHEA-COMP:13555"/>
        <dbReference type="Rhea" id="RHEA-COMP:13556"/>
        <dbReference type="ChEBI" id="CHEBI:29950"/>
        <dbReference type="ChEBI" id="CHEBI:82612"/>
        <dbReference type="ChEBI" id="CHEBI:137386"/>
        <dbReference type="ChEBI" id="CHEBI:137387"/>
        <dbReference type="EC" id="2.1.1.63"/>
    </reaction>
</comment>
<comment type="subcellular location">
    <subcellularLocation>
        <location evidence="1">Cytoplasm</location>
    </subcellularLocation>
</comment>
<comment type="miscellaneous">
    <text>This enzyme catalyzes only one turnover and therefore is not strictly catalytic. According to one definition, an enzyme is a biocatalyst that acts repeatedly and over many reaction cycles.</text>
</comment>
<comment type="similarity">
    <text evidence="1">Belongs to the MGMT family.</text>
</comment>
<feature type="chain" id="PRO_0000139369" description="Methylated-DNA--protein-cysteine methyltransferase">
    <location>
        <begin position="1"/>
        <end position="165"/>
    </location>
</feature>
<feature type="active site" description="Nucleophile; methyl group acceptor" evidence="1">
    <location>
        <position position="126"/>
    </location>
</feature>
<feature type="strand" evidence="2">
    <location>
        <begin position="3"/>
        <end position="7"/>
    </location>
</feature>
<feature type="strand" evidence="2">
    <location>
        <begin position="14"/>
        <end position="19"/>
    </location>
</feature>
<feature type="strand" evidence="2">
    <location>
        <begin position="22"/>
        <end position="27"/>
    </location>
</feature>
<feature type="helix" evidence="2">
    <location>
        <begin position="35"/>
        <end position="39"/>
    </location>
</feature>
<feature type="strand" evidence="3">
    <location>
        <begin position="40"/>
        <end position="42"/>
    </location>
</feature>
<feature type="turn" evidence="3">
    <location>
        <begin position="44"/>
        <end position="47"/>
    </location>
</feature>
<feature type="helix" evidence="2">
    <location>
        <begin position="48"/>
        <end position="58"/>
    </location>
</feature>
<feature type="helix" evidence="2">
    <location>
        <begin position="75"/>
        <end position="84"/>
    </location>
</feature>
<feature type="helix" evidence="2">
    <location>
        <begin position="95"/>
        <end position="101"/>
    </location>
</feature>
<feature type="helix" evidence="2">
    <location>
        <begin position="108"/>
        <end position="116"/>
    </location>
</feature>
<feature type="turn" evidence="2">
    <location>
        <begin position="121"/>
        <end position="123"/>
    </location>
</feature>
<feature type="helix" evidence="2">
    <location>
        <begin position="126"/>
        <end position="128"/>
    </location>
</feature>
<feature type="turn" evidence="2">
    <location>
        <begin position="139"/>
        <end position="141"/>
    </location>
</feature>
<feature type="helix" evidence="2">
    <location>
        <begin position="142"/>
        <end position="154"/>
    </location>
</feature>
<feature type="helix" evidence="2">
    <location>
        <begin position="161"/>
        <end position="164"/>
    </location>
</feature>
<evidence type="ECO:0000255" key="1">
    <source>
        <dbReference type="HAMAP-Rule" id="MF_00772"/>
    </source>
</evidence>
<evidence type="ECO:0007829" key="2">
    <source>
        <dbReference type="PDB" id="4BHB"/>
    </source>
</evidence>
<evidence type="ECO:0007829" key="3">
    <source>
        <dbReference type="PDB" id="4WXC"/>
    </source>
</evidence>
<name>OGT_MYCTU</name>
<reference key="1">
    <citation type="submission" date="1996-08" db="EMBL/GenBank/DDBJ databases">
        <title>Mycobacterium tuberculosis 3-methyladenine glycosidase and O6-methylguanine methyltransferase genes.</title>
        <authorList>
            <person name="Bourn W.R."/>
            <person name="Harington A."/>
            <person name="Wiid I."/>
            <person name="van Helden P.D."/>
        </authorList>
    </citation>
    <scope>NUCLEOTIDE SEQUENCE [GENOMIC DNA]</scope>
    <source>
        <strain>ATCC 25618 / H37Rv</strain>
    </source>
</reference>
<reference key="2">
    <citation type="journal article" date="1998" name="Nature">
        <title>Deciphering the biology of Mycobacterium tuberculosis from the complete genome sequence.</title>
        <authorList>
            <person name="Cole S.T."/>
            <person name="Brosch R."/>
            <person name="Parkhill J."/>
            <person name="Garnier T."/>
            <person name="Churcher C.M."/>
            <person name="Harris D.E."/>
            <person name="Gordon S.V."/>
            <person name="Eiglmeier K."/>
            <person name="Gas S."/>
            <person name="Barry C.E. III"/>
            <person name="Tekaia F."/>
            <person name="Badcock K."/>
            <person name="Basham D."/>
            <person name="Brown D."/>
            <person name="Chillingworth T."/>
            <person name="Connor R."/>
            <person name="Davies R.M."/>
            <person name="Devlin K."/>
            <person name="Feltwell T."/>
            <person name="Gentles S."/>
            <person name="Hamlin N."/>
            <person name="Holroyd S."/>
            <person name="Hornsby T."/>
            <person name="Jagels K."/>
            <person name="Krogh A."/>
            <person name="McLean J."/>
            <person name="Moule S."/>
            <person name="Murphy L.D."/>
            <person name="Oliver S."/>
            <person name="Osborne J."/>
            <person name="Quail M.A."/>
            <person name="Rajandream M.A."/>
            <person name="Rogers J."/>
            <person name="Rutter S."/>
            <person name="Seeger K."/>
            <person name="Skelton S."/>
            <person name="Squares S."/>
            <person name="Squares R."/>
            <person name="Sulston J.E."/>
            <person name="Taylor K."/>
            <person name="Whitehead S."/>
            <person name="Barrell B.G."/>
        </authorList>
    </citation>
    <scope>NUCLEOTIDE SEQUENCE [LARGE SCALE GENOMIC DNA]</scope>
    <source>
        <strain>ATCC 25618 / H37Rv</strain>
    </source>
</reference>
<reference key="3">
    <citation type="journal article" date="2011" name="Mol. Cell. Proteomics">
        <title>Proteogenomic analysis of Mycobacterium tuberculosis by high resolution mass spectrometry.</title>
        <authorList>
            <person name="Kelkar D.S."/>
            <person name="Kumar D."/>
            <person name="Kumar P."/>
            <person name="Balakrishnan L."/>
            <person name="Muthusamy B."/>
            <person name="Yadav A.K."/>
            <person name="Shrivastava P."/>
            <person name="Marimuthu A."/>
            <person name="Anand S."/>
            <person name="Sundaram H."/>
            <person name="Kingsbury R."/>
            <person name="Harsha H.C."/>
            <person name="Nair B."/>
            <person name="Prasad T.S."/>
            <person name="Chauhan D.S."/>
            <person name="Katoch K."/>
            <person name="Katoch V.M."/>
            <person name="Kumar P."/>
            <person name="Chaerkady R."/>
            <person name="Ramachandran S."/>
            <person name="Dash D."/>
            <person name="Pandey A."/>
        </authorList>
    </citation>
    <scope>IDENTIFICATION BY MASS SPECTROMETRY [LARGE SCALE ANALYSIS]</scope>
    <source>
        <strain>ATCC 25618 / H37Rv</strain>
    </source>
</reference>
<proteinExistence type="evidence at protein level"/>
<dbReference type="EC" id="2.1.1.63" evidence="1"/>
<dbReference type="EMBL" id="U65786">
    <property type="protein sequence ID" value="AAB06752.1"/>
    <property type="molecule type" value="Genomic_DNA"/>
</dbReference>
<dbReference type="EMBL" id="AL123456">
    <property type="protein sequence ID" value="CCP44073.1"/>
    <property type="molecule type" value="Genomic_DNA"/>
</dbReference>
<dbReference type="PIR" id="H70768">
    <property type="entry name" value="H70768"/>
</dbReference>
<dbReference type="RefSeq" id="NP_215832.1">
    <property type="nucleotide sequence ID" value="NC_000962.3"/>
</dbReference>
<dbReference type="RefSeq" id="WP_003406857.1">
    <property type="nucleotide sequence ID" value="NZ_NVQJ01000059.1"/>
</dbReference>
<dbReference type="PDB" id="4BHB">
    <property type="method" value="X-ray"/>
    <property type="resolution" value="1.80 A"/>
    <property type="chains" value="A=3-165"/>
</dbReference>
<dbReference type="PDB" id="4BHC">
    <property type="method" value="X-ray"/>
    <property type="resolution" value="2.80 A"/>
    <property type="chains" value="A=3-165"/>
</dbReference>
<dbReference type="PDB" id="4WX9">
    <property type="method" value="X-ray"/>
    <property type="resolution" value="3.00 A"/>
    <property type="chains" value="A/B/C=1-165"/>
</dbReference>
<dbReference type="PDB" id="4WXC">
    <property type="method" value="X-ray"/>
    <property type="resolution" value="2.60 A"/>
    <property type="chains" value="A=1-165"/>
</dbReference>
<dbReference type="PDB" id="4WXD">
    <property type="method" value="X-ray"/>
    <property type="resolution" value="2.30 A"/>
    <property type="chains" value="A=1-165"/>
</dbReference>
<dbReference type="PDBsum" id="4BHB"/>
<dbReference type="PDBsum" id="4BHC"/>
<dbReference type="PDBsum" id="4WX9"/>
<dbReference type="PDBsum" id="4WXC"/>
<dbReference type="PDBsum" id="4WXD"/>
<dbReference type="SMR" id="P9WJW5"/>
<dbReference type="FunCoup" id="P9WJW5">
    <property type="interactions" value="57"/>
</dbReference>
<dbReference type="STRING" id="83332.Rv1316c"/>
<dbReference type="PaxDb" id="83332-Rv1316c"/>
<dbReference type="DNASU" id="886913"/>
<dbReference type="GeneID" id="45425292"/>
<dbReference type="GeneID" id="886913"/>
<dbReference type="KEGG" id="mtu:Rv1316c"/>
<dbReference type="KEGG" id="mtv:RVBD_1316c"/>
<dbReference type="TubercuList" id="Rv1316c"/>
<dbReference type="eggNOG" id="COG0350">
    <property type="taxonomic scope" value="Bacteria"/>
</dbReference>
<dbReference type="InParanoid" id="P9WJW5"/>
<dbReference type="OrthoDB" id="9802228at2"/>
<dbReference type="PhylomeDB" id="P9WJW5"/>
<dbReference type="BRENDA" id="2.1.1.63">
    <property type="organism ID" value="3445"/>
</dbReference>
<dbReference type="BRENDA" id="6.3.4.21">
    <property type="organism ID" value="3445"/>
</dbReference>
<dbReference type="EvolutionaryTrace" id="P9WJW5"/>
<dbReference type="Proteomes" id="UP000001584">
    <property type="component" value="Chromosome"/>
</dbReference>
<dbReference type="GO" id="GO:0005737">
    <property type="term" value="C:cytoplasm"/>
    <property type="evidence" value="ECO:0007669"/>
    <property type="project" value="UniProtKB-SubCell"/>
</dbReference>
<dbReference type="GO" id="GO:0005886">
    <property type="term" value="C:plasma membrane"/>
    <property type="evidence" value="ECO:0007005"/>
    <property type="project" value="MTBBASE"/>
</dbReference>
<dbReference type="GO" id="GO:0003908">
    <property type="term" value="F:methylated-DNA-[protein]-cysteine S-methyltransferase activity"/>
    <property type="evidence" value="ECO:0007669"/>
    <property type="project" value="UniProtKB-UniRule"/>
</dbReference>
<dbReference type="GO" id="GO:0006307">
    <property type="term" value="P:DNA alkylation repair"/>
    <property type="evidence" value="ECO:0000314"/>
    <property type="project" value="MTBBASE"/>
</dbReference>
<dbReference type="GO" id="GO:0032259">
    <property type="term" value="P:methylation"/>
    <property type="evidence" value="ECO:0007669"/>
    <property type="project" value="UniProtKB-KW"/>
</dbReference>
<dbReference type="GO" id="GO:0051409">
    <property type="term" value="P:response to nitrosative stress"/>
    <property type="evidence" value="ECO:0000314"/>
    <property type="project" value="MTBBASE"/>
</dbReference>
<dbReference type="CDD" id="cd06445">
    <property type="entry name" value="ATase"/>
    <property type="match status" value="1"/>
</dbReference>
<dbReference type="FunFam" id="1.10.10.10:FF:000214">
    <property type="entry name" value="Methylated-DNA--protein-cysteine methyltransferase"/>
    <property type="match status" value="1"/>
</dbReference>
<dbReference type="Gene3D" id="3.30.160.70">
    <property type="entry name" value="Methylated DNA-protein cysteine methyltransferase domain"/>
    <property type="match status" value="1"/>
</dbReference>
<dbReference type="Gene3D" id="1.10.10.10">
    <property type="entry name" value="Winged helix-like DNA-binding domain superfamily/Winged helix DNA-binding domain"/>
    <property type="match status" value="1"/>
</dbReference>
<dbReference type="HAMAP" id="MF_00772">
    <property type="entry name" value="OGT"/>
    <property type="match status" value="1"/>
</dbReference>
<dbReference type="InterPro" id="IPR001497">
    <property type="entry name" value="MethylDNA_cys_MeTrfase_AS"/>
</dbReference>
<dbReference type="InterPro" id="IPR014048">
    <property type="entry name" value="MethylDNA_cys_MeTrfase_DNA-bd"/>
</dbReference>
<dbReference type="InterPro" id="IPR036217">
    <property type="entry name" value="MethylDNA_cys_MeTrfase_DNAb"/>
</dbReference>
<dbReference type="InterPro" id="IPR008332">
    <property type="entry name" value="MethylG_MeTrfase_N"/>
</dbReference>
<dbReference type="InterPro" id="IPR023546">
    <property type="entry name" value="MGMT"/>
</dbReference>
<dbReference type="InterPro" id="IPR036631">
    <property type="entry name" value="MGMT_N_sf"/>
</dbReference>
<dbReference type="InterPro" id="IPR036388">
    <property type="entry name" value="WH-like_DNA-bd_sf"/>
</dbReference>
<dbReference type="NCBIfam" id="TIGR00589">
    <property type="entry name" value="ogt"/>
    <property type="match status" value="1"/>
</dbReference>
<dbReference type="PANTHER" id="PTHR10815">
    <property type="entry name" value="METHYLATED-DNA--PROTEIN-CYSTEINE METHYLTRANSFERASE"/>
    <property type="match status" value="1"/>
</dbReference>
<dbReference type="PANTHER" id="PTHR10815:SF5">
    <property type="entry name" value="METHYLATED-DNA--PROTEIN-CYSTEINE METHYLTRANSFERASE"/>
    <property type="match status" value="1"/>
</dbReference>
<dbReference type="Pfam" id="PF01035">
    <property type="entry name" value="DNA_binding_1"/>
    <property type="match status" value="1"/>
</dbReference>
<dbReference type="Pfam" id="PF02870">
    <property type="entry name" value="Methyltransf_1N"/>
    <property type="match status" value="1"/>
</dbReference>
<dbReference type="SUPFAM" id="SSF53155">
    <property type="entry name" value="Methylated DNA-protein cysteine methyltransferase domain"/>
    <property type="match status" value="1"/>
</dbReference>
<dbReference type="SUPFAM" id="SSF46767">
    <property type="entry name" value="Methylated DNA-protein cysteine methyltransferase, C-terminal domain"/>
    <property type="match status" value="1"/>
</dbReference>
<dbReference type="PROSITE" id="PS00374">
    <property type="entry name" value="MGMT"/>
    <property type="match status" value="1"/>
</dbReference>
<protein>
    <recommendedName>
        <fullName evidence="1">Methylated-DNA--protein-cysteine methyltransferase</fullName>
        <ecNumber evidence="1">2.1.1.63</ecNumber>
    </recommendedName>
    <alternativeName>
        <fullName evidence="1">6-O-methylguanine-DNA methyltransferase</fullName>
        <shortName evidence="1">MGMT</shortName>
    </alternativeName>
    <alternativeName>
        <fullName evidence="1">O-6-methylguanine-DNA-alkyltransferase</fullName>
    </alternativeName>
</protein>
<keyword id="KW-0002">3D-structure</keyword>
<keyword id="KW-0963">Cytoplasm</keyword>
<keyword id="KW-0227">DNA damage</keyword>
<keyword id="KW-0234">DNA repair</keyword>
<keyword id="KW-0489">Methyltransferase</keyword>
<keyword id="KW-1185">Reference proteome</keyword>
<keyword id="KW-0808">Transferase</keyword>
<sequence>MIHYRTIDSPIGPLTLAGHGSVLTNLRMLEQTYEPSRTHWTPDPGAFSGAVDQLNAYFAGELTEFDVELDLRGTDFQQRVWKALLTIPYGETRSYGEIADQIGAPGAARAVGLANGHNPIAIIVPCHRVIGASGKLTGYGGGINRKRALLELEKSRAPADLTLFD</sequence>
<organism>
    <name type="scientific">Mycobacterium tuberculosis (strain ATCC 25618 / H37Rv)</name>
    <dbReference type="NCBI Taxonomy" id="83332"/>
    <lineage>
        <taxon>Bacteria</taxon>
        <taxon>Bacillati</taxon>
        <taxon>Actinomycetota</taxon>
        <taxon>Actinomycetes</taxon>
        <taxon>Mycobacteriales</taxon>
        <taxon>Mycobacteriaceae</taxon>
        <taxon>Mycobacterium</taxon>
        <taxon>Mycobacterium tuberculosis complex</taxon>
    </lineage>
</organism>